<reference key="1">
    <citation type="journal article" date="1998" name="Mol. Immunol.">
        <title>Sequence comparisons of non-human primate HIV-1 coreceptor homologues.</title>
        <authorList>
            <person name="Benton P.A."/>
            <person name="Lee D.R."/>
            <person name="Kennedy R.C."/>
        </authorList>
    </citation>
    <scope>NUCLEOTIDE SEQUENCE [MRNA]</scope>
</reference>
<evidence type="ECO:0000250" key="1">
    <source>
        <dbReference type="UniProtKB" id="P51681"/>
    </source>
</evidence>
<evidence type="ECO:0000250" key="2">
    <source>
        <dbReference type="UniProtKB" id="Q9XT76"/>
    </source>
</evidence>
<evidence type="ECO:0000255" key="3"/>
<evidence type="ECO:0000255" key="4">
    <source>
        <dbReference type="PROSITE-ProRule" id="PRU00521"/>
    </source>
</evidence>
<dbReference type="EMBL" id="AF023452">
    <property type="protein sequence ID" value="AAC63830.1"/>
    <property type="molecule type" value="mRNA"/>
</dbReference>
<dbReference type="SMR" id="P68269"/>
<dbReference type="STRING" id="9555.ENSPANP00000003334"/>
<dbReference type="GlyCosmos" id="P68269">
    <property type="glycosylation" value="2 sites, No reported glycans"/>
</dbReference>
<dbReference type="eggNOG" id="KOG3656">
    <property type="taxonomic scope" value="Eukaryota"/>
</dbReference>
<dbReference type="Proteomes" id="UP000028761">
    <property type="component" value="Unplaced"/>
</dbReference>
<dbReference type="GO" id="GO:0005737">
    <property type="term" value="C:cytoplasm"/>
    <property type="evidence" value="ECO:0007669"/>
    <property type="project" value="TreeGrafter"/>
</dbReference>
<dbReference type="GO" id="GO:0009897">
    <property type="term" value="C:external side of plasma membrane"/>
    <property type="evidence" value="ECO:0000250"/>
    <property type="project" value="UniProtKB"/>
</dbReference>
<dbReference type="GO" id="GO:0016493">
    <property type="term" value="F:C-C chemokine receptor activity"/>
    <property type="evidence" value="ECO:0000250"/>
    <property type="project" value="UniProtKB"/>
</dbReference>
<dbReference type="GO" id="GO:0071791">
    <property type="term" value="F:chemokine (C-C motif) ligand 5 binding"/>
    <property type="evidence" value="ECO:0007669"/>
    <property type="project" value="TreeGrafter"/>
</dbReference>
<dbReference type="GO" id="GO:0019722">
    <property type="term" value="P:calcium-mediated signaling"/>
    <property type="evidence" value="ECO:0007669"/>
    <property type="project" value="TreeGrafter"/>
</dbReference>
<dbReference type="GO" id="GO:0060326">
    <property type="term" value="P:cell chemotaxis"/>
    <property type="evidence" value="ECO:0007669"/>
    <property type="project" value="TreeGrafter"/>
</dbReference>
<dbReference type="GO" id="GO:0006955">
    <property type="term" value="P:immune response"/>
    <property type="evidence" value="ECO:0007669"/>
    <property type="project" value="InterPro"/>
</dbReference>
<dbReference type="GO" id="GO:0006954">
    <property type="term" value="P:inflammatory response"/>
    <property type="evidence" value="ECO:0007669"/>
    <property type="project" value="InterPro"/>
</dbReference>
<dbReference type="GO" id="GO:0007204">
    <property type="term" value="P:positive regulation of cytosolic calcium ion concentration"/>
    <property type="evidence" value="ECO:0007669"/>
    <property type="project" value="TreeGrafter"/>
</dbReference>
<dbReference type="CDD" id="cd15184">
    <property type="entry name" value="7tmA_CCR5_CCR2"/>
    <property type="match status" value="1"/>
</dbReference>
<dbReference type="FunFam" id="1.20.1070.10:FF:000026">
    <property type="entry name" value="C-C chemokine receptor type 5"/>
    <property type="match status" value="1"/>
</dbReference>
<dbReference type="Gene3D" id="1.20.1070.10">
    <property type="entry name" value="Rhodopsin 7-helix transmembrane proteins"/>
    <property type="match status" value="1"/>
</dbReference>
<dbReference type="InterPro" id="IPR050119">
    <property type="entry name" value="CCR1-9-like"/>
</dbReference>
<dbReference type="InterPro" id="IPR002240">
    <property type="entry name" value="Chemokine_CCR5"/>
</dbReference>
<dbReference type="InterPro" id="IPR000355">
    <property type="entry name" value="Chemokine_rcpt"/>
</dbReference>
<dbReference type="InterPro" id="IPR000276">
    <property type="entry name" value="GPCR_Rhodpsn"/>
</dbReference>
<dbReference type="InterPro" id="IPR017452">
    <property type="entry name" value="GPCR_Rhodpsn_7TM"/>
</dbReference>
<dbReference type="PANTHER" id="PTHR10489:SF686">
    <property type="entry name" value="C-C CHEMOKINE RECEPTOR TYPE 5"/>
    <property type="match status" value="1"/>
</dbReference>
<dbReference type="PANTHER" id="PTHR10489">
    <property type="entry name" value="CELL ADHESION MOLECULE"/>
    <property type="match status" value="1"/>
</dbReference>
<dbReference type="Pfam" id="PF00001">
    <property type="entry name" value="7tm_1"/>
    <property type="match status" value="1"/>
</dbReference>
<dbReference type="PRINTS" id="PR00657">
    <property type="entry name" value="CCCHEMOKINER"/>
</dbReference>
<dbReference type="PRINTS" id="PR01110">
    <property type="entry name" value="CHEMOKINER5"/>
</dbReference>
<dbReference type="PRINTS" id="PR00237">
    <property type="entry name" value="GPCRRHODOPSN"/>
</dbReference>
<dbReference type="SUPFAM" id="SSF81321">
    <property type="entry name" value="Family A G protein-coupled receptor-like"/>
    <property type="match status" value="1"/>
</dbReference>
<dbReference type="PROSITE" id="PS00237">
    <property type="entry name" value="G_PROTEIN_RECEP_F1_1"/>
    <property type="match status" value="1"/>
</dbReference>
<dbReference type="PROSITE" id="PS50262">
    <property type="entry name" value="G_PROTEIN_RECEP_F1_2"/>
    <property type="match status" value="1"/>
</dbReference>
<name>CCR5_PAPAN</name>
<sequence>MDYQVSSPTYDIDYYTSEPCQKINVKQIAARLLPPLYSLVFIFGFVGNILVVLILINCKRLKSMTDIYLLNLAISDLLFLLTVPFWAHYAAAQWDFGNTMCQLLTGLYFIGFFSGIFFIILLTIDRYLAIVHAVFALKARTVTFGVVTSVITWVVAVFASLPGIIFTRSQREGLHYTCSSHFPYSQYQFWKNFQTLKIVILGLVLPLLVMVICYSGILKTLLRCRNEKKRHRAVRLIFTIMIVYFLFWAPYNIVLLLNTFQEFFGLNNCSSSNRLDQAMQVTETLGMTHCCINPIIYAFVGEKFRNYLLVFFQKHIAKRFCKCCSIFQQEAPERASSVYTRSTGEQEISVGL</sequence>
<organism>
    <name type="scientific">Papio anubis</name>
    <name type="common">Olive baboon</name>
    <dbReference type="NCBI Taxonomy" id="9555"/>
    <lineage>
        <taxon>Eukaryota</taxon>
        <taxon>Metazoa</taxon>
        <taxon>Chordata</taxon>
        <taxon>Craniata</taxon>
        <taxon>Vertebrata</taxon>
        <taxon>Euteleostomi</taxon>
        <taxon>Mammalia</taxon>
        <taxon>Eutheria</taxon>
        <taxon>Euarchontoglires</taxon>
        <taxon>Primates</taxon>
        <taxon>Haplorrhini</taxon>
        <taxon>Catarrhini</taxon>
        <taxon>Cercopithecidae</taxon>
        <taxon>Cercopithecinae</taxon>
        <taxon>Papio</taxon>
    </lineage>
</organism>
<comment type="function">
    <text evidence="1">Receptor for a number of inflammatory CC-chemokines including CCL3/MIP-1-alpha, CCL4/MIP-1-beta and RANTES and subsequently transduces a signal by increasing the intracellular calcium ion level. May play a role in the control of granulocytic lineage proliferation or differentiation. Participates in T-lymphocyte migration to the infection site by acting as a chemotactic receptor.</text>
</comment>
<comment type="subunit">
    <text evidence="1">Interacts with PRAF2. Efficient ligand binding to CCL3/MIP-1alpha and CCL4/MIP-1beta requires sulfation, O-glycosylation and sialic acid modifications. Glycosylation on Ser-6 is required for efficient binding of CCL4. Interacts with GRK2. Interacts with ARRB1 and ARRB2. Interacts with CNIH4. Interacts with S100A4; this interaction stimulates T-lymphocyte chemotaxis.</text>
</comment>
<comment type="subcellular location">
    <subcellularLocation>
        <location evidence="2">Cell membrane</location>
        <topology evidence="2">Multi-pass membrane protein</topology>
    </subcellularLocation>
</comment>
<comment type="PTM">
    <text evidence="1">Sulfated on at least 2 of the N-terminal tyrosines. Sulfation is required for efficient binding of the chemokines, CCL3 and CCL4 (By similarity).</text>
</comment>
<comment type="PTM">
    <text evidence="1">Palmitoylation in the C-terminal is important for cell surface expression.</text>
</comment>
<comment type="PTM">
    <text evidence="1">Phosphorylation on serine residues in the C-terminal is stimulated by binding CC chemokines especially by APO-RANTES.</text>
</comment>
<comment type="PTM">
    <text evidence="1">O-glycosylated, but not N-glycosylated. Ser-6 appears to be the major site even if Ser-7 may be also O-glycosylated. Also sialylated glycans present which contribute to chemokine binding. Thr-16 and Ser-17 may also be glycosylated and, if so, with small moieties such as a T-antigen.</text>
</comment>
<comment type="similarity">
    <text evidence="4">Belongs to the G-protein coupled receptor 1 family.</text>
</comment>
<protein>
    <recommendedName>
        <fullName>C-C chemokine receptor type 5</fullName>
        <shortName>C-C CKR-5</shortName>
        <shortName>CC-CKR-5</shortName>
        <shortName>CCR-5</shortName>
        <shortName>CCR5</shortName>
    </recommendedName>
    <cdAntigenName>CD195</cdAntigenName>
</protein>
<feature type="chain" id="PRO_0000069273" description="C-C chemokine receptor type 5">
    <location>
        <begin position="1"/>
        <end position="352"/>
    </location>
</feature>
<feature type="topological domain" description="Extracellular" evidence="3">
    <location>
        <begin position="1"/>
        <end position="30"/>
    </location>
</feature>
<feature type="transmembrane region" description="Helical; Name=1" evidence="3">
    <location>
        <begin position="31"/>
        <end position="58"/>
    </location>
</feature>
<feature type="topological domain" description="Cytoplasmic" evidence="3">
    <location>
        <begin position="59"/>
        <end position="68"/>
    </location>
</feature>
<feature type="transmembrane region" description="Helical; Name=2" evidence="3">
    <location>
        <begin position="69"/>
        <end position="89"/>
    </location>
</feature>
<feature type="topological domain" description="Extracellular" evidence="3">
    <location>
        <begin position="90"/>
        <end position="102"/>
    </location>
</feature>
<feature type="transmembrane region" description="Helical; Name=3" evidence="3">
    <location>
        <begin position="103"/>
        <end position="124"/>
    </location>
</feature>
<feature type="topological domain" description="Cytoplasmic" evidence="3">
    <location>
        <begin position="125"/>
        <end position="141"/>
    </location>
</feature>
<feature type="transmembrane region" description="Helical; Name=4" evidence="3">
    <location>
        <begin position="142"/>
        <end position="166"/>
    </location>
</feature>
<feature type="topological domain" description="Extracellular" evidence="3">
    <location>
        <begin position="167"/>
        <end position="198"/>
    </location>
</feature>
<feature type="transmembrane region" description="Helical; Name=5" evidence="3">
    <location>
        <begin position="199"/>
        <end position="218"/>
    </location>
</feature>
<feature type="topological domain" description="Cytoplasmic" evidence="3">
    <location>
        <begin position="219"/>
        <end position="235"/>
    </location>
</feature>
<feature type="transmembrane region" description="Helical; Name=6" evidence="3">
    <location>
        <begin position="236"/>
        <end position="260"/>
    </location>
</feature>
<feature type="topological domain" description="Extracellular" evidence="3">
    <location>
        <begin position="261"/>
        <end position="277"/>
    </location>
</feature>
<feature type="transmembrane region" description="Helical; Name=7" evidence="3">
    <location>
        <begin position="278"/>
        <end position="301"/>
    </location>
</feature>
<feature type="topological domain" description="Cytoplasmic" evidence="3">
    <location>
        <begin position="302"/>
        <end position="352"/>
    </location>
</feature>
<feature type="modified residue" description="Sulfotyrosine" evidence="1">
    <location>
        <position position="3"/>
    </location>
</feature>
<feature type="modified residue" description="Sulfotyrosine" evidence="3">
    <location>
        <position position="10"/>
    </location>
</feature>
<feature type="modified residue" description="Sulfotyrosine" evidence="3">
    <location>
        <position position="14"/>
    </location>
</feature>
<feature type="modified residue" description="Sulfotyrosine" evidence="3">
    <location>
        <position position="15"/>
    </location>
</feature>
<feature type="modified residue" description="Phosphoserine; by BARK1" evidence="1">
    <location>
        <position position="336"/>
    </location>
</feature>
<feature type="modified residue" description="Phosphoserine; by BARK1" evidence="1">
    <location>
        <position position="337"/>
    </location>
</feature>
<feature type="modified residue" description="Phosphoserine; by BARK1" evidence="1">
    <location>
        <position position="342"/>
    </location>
</feature>
<feature type="modified residue" description="Phosphoserine; by BARK1" evidence="1">
    <location>
        <position position="349"/>
    </location>
</feature>
<feature type="lipid moiety-binding region" description="S-palmitoyl cysteine" evidence="1">
    <location>
        <position position="321"/>
    </location>
</feature>
<feature type="lipid moiety-binding region" description="S-palmitoyl cysteine" evidence="1">
    <location>
        <position position="323"/>
    </location>
</feature>
<feature type="lipid moiety-binding region" description="S-palmitoyl cysteine" evidence="1">
    <location>
        <position position="324"/>
    </location>
</feature>
<feature type="glycosylation site" description="O-linked (GalNAc...) serine" evidence="1">
    <location>
        <position position="6"/>
    </location>
</feature>
<feature type="glycosylation site" description="O-linked (GalNAc...) serine" evidence="1">
    <location>
        <position position="7"/>
    </location>
</feature>
<feature type="disulfide bond" evidence="1">
    <location>
        <begin position="20"/>
        <end position="269"/>
    </location>
</feature>
<feature type="disulfide bond" evidence="4">
    <location>
        <begin position="101"/>
        <end position="178"/>
    </location>
</feature>
<accession>P68269</accession>
<accession>P56441</accession>
<proteinExistence type="evidence at transcript level"/>
<keyword id="KW-1003">Cell membrane</keyword>
<keyword id="KW-1015">Disulfide bond</keyword>
<keyword id="KW-0297">G-protein coupled receptor</keyword>
<keyword id="KW-0325">Glycoprotein</keyword>
<keyword id="KW-0449">Lipoprotein</keyword>
<keyword id="KW-0472">Membrane</keyword>
<keyword id="KW-0564">Palmitate</keyword>
<keyword id="KW-0597">Phosphoprotein</keyword>
<keyword id="KW-0675">Receptor</keyword>
<keyword id="KW-1185">Reference proteome</keyword>
<keyword id="KW-0765">Sulfation</keyword>
<keyword id="KW-0807">Transducer</keyword>
<keyword id="KW-0812">Transmembrane</keyword>
<keyword id="KW-1133">Transmembrane helix</keyword>
<gene>
    <name type="primary">CCR5</name>
    <name type="synonym">CMKBR5</name>
</gene>